<accession>K7K424</accession>
<sequence length="329" mass="36885">MAAEPVSDGGAAAEKLISGREEFGDSSNLFSAILAMVLWLGAIHFNIALILLAVFFLPLSKSLLVFGFLFGFMVLPINEKSRFGRRLSRFICKHACNYFPITLHVEDMKAFDPNRAYVFGYEPHSVLPIGIVALADHTGFMPLPKVKVLASSTVFYTPFLRHLWTWLGLTPATKKNFISLLASGHSCILIPGGVQEAFHMQHGTEIAFLKARRGFVRVAMVKGKPLVPVFCFGQSNVYKWWKPGGKLFLKFARAIKFTPICFWGIFGSPLPFRHPMHVVVGRPIEVDKNREPTTEEVAKIHGLFVEALQDLFERHKARAGYPNLELRIV</sequence>
<proteinExistence type="evidence at protein level"/>
<protein>
    <recommendedName>
        <fullName evidence="5">Diacylglycerol O-acyltransferase 2D</fullName>
        <shortName evidence="4">GmDGAT2D</shortName>
        <ecNumber evidence="3">2.3.1.20</ecNumber>
    </recommendedName>
</protein>
<dbReference type="EC" id="2.3.1.20" evidence="3"/>
<dbReference type="EMBL" id="KP752053">
    <property type="protein sequence ID" value="AKR16145.1"/>
    <property type="molecule type" value="mRNA"/>
</dbReference>
<dbReference type="EMBL" id="CM000834">
    <property type="protein sequence ID" value="KRH76487.1"/>
    <property type="molecule type" value="Genomic_DNA"/>
</dbReference>
<dbReference type="RefSeq" id="NP_001299586.1">
    <property type="nucleotide sequence ID" value="NM_001312657.1"/>
</dbReference>
<dbReference type="FunCoup" id="K7K424">
    <property type="interactions" value="2141"/>
</dbReference>
<dbReference type="STRING" id="3847.K7K424"/>
<dbReference type="PaxDb" id="3847-GLYMA01G36011.1"/>
<dbReference type="EnsemblPlants" id="KRH76487">
    <property type="protein sequence ID" value="KRH76487"/>
    <property type="gene ID" value="GLYMA_01G156000"/>
</dbReference>
<dbReference type="GeneID" id="100784657"/>
<dbReference type="Gramene" id="KRH76487">
    <property type="protein sequence ID" value="KRH76487"/>
    <property type="gene ID" value="GLYMA_01G156000"/>
</dbReference>
<dbReference type="KEGG" id="gmx:100784657"/>
<dbReference type="eggNOG" id="KOG0831">
    <property type="taxonomic scope" value="Eukaryota"/>
</dbReference>
<dbReference type="HOGENOM" id="CLU_023995_2_0_1"/>
<dbReference type="InParanoid" id="K7K424"/>
<dbReference type="OMA" id="WIKNWTL"/>
<dbReference type="OrthoDB" id="264532at2759"/>
<dbReference type="BRENDA" id="2.3.1.20">
    <property type="organism ID" value="2483"/>
</dbReference>
<dbReference type="Proteomes" id="UP000008827">
    <property type="component" value="Chromosome 1"/>
</dbReference>
<dbReference type="GO" id="GO:0005789">
    <property type="term" value="C:endoplasmic reticulum membrane"/>
    <property type="evidence" value="ECO:0000314"/>
    <property type="project" value="UniProtKB"/>
</dbReference>
<dbReference type="GO" id="GO:0005811">
    <property type="term" value="C:lipid droplet"/>
    <property type="evidence" value="ECO:0007669"/>
    <property type="project" value="UniProtKB-SubCell"/>
</dbReference>
<dbReference type="GO" id="GO:0004144">
    <property type="term" value="F:diacylglycerol O-acyltransferase activity"/>
    <property type="evidence" value="ECO:0000314"/>
    <property type="project" value="UniProtKB"/>
</dbReference>
<dbReference type="GO" id="GO:0006071">
    <property type="term" value="P:glycerol metabolic process"/>
    <property type="evidence" value="ECO:0007669"/>
    <property type="project" value="UniProtKB-KW"/>
</dbReference>
<dbReference type="GO" id="GO:0019432">
    <property type="term" value="P:triglyceride biosynthetic process"/>
    <property type="evidence" value="ECO:0000314"/>
    <property type="project" value="UniProtKB"/>
</dbReference>
<dbReference type="CDD" id="cd07987">
    <property type="entry name" value="LPLAT_MGAT-like"/>
    <property type="match status" value="1"/>
</dbReference>
<dbReference type="InterPro" id="IPR007130">
    <property type="entry name" value="DAGAT"/>
</dbReference>
<dbReference type="PANTHER" id="PTHR12317">
    <property type="entry name" value="DIACYLGLYCEROL O-ACYLTRANSFERASE"/>
    <property type="match status" value="1"/>
</dbReference>
<dbReference type="PANTHER" id="PTHR12317:SF63">
    <property type="entry name" value="DIACYLGLYCEROL O-ACYLTRANSFERASE 2"/>
    <property type="match status" value="1"/>
</dbReference>
<dbReference type="Pfam" id="PF03982">
    <property type="entry name" value="DAGAT"/>
    <property type="match status" value="1"/>
</dbReference>
<organism>
    <name type="scientific">Glycine max</name>
    <name type="common">Soybean</name>
    <name type="synonym">Glycine hispida</name>
    <dbReference type="NCBI Taxonomy" id="3847"/>
    <lineage>
        <taxon>Eukaryota</taxon>
        <taxon>Viridiplantae</taxon>
        <taxon>Streptophyta</taxon>
        <taxon>Embryophyta</taxon>
        <taxon>Tracheophyta</taxon>
        <taxon>Spermatophyta</taxon>
        <taxon>Magnoliopsida</taxon>
        <taxon>eudicotyledons</taxon>
        <taxon>Gunneridae</taxon>
        <taxon>Pentapetalae</taxon>
        <taxon>rosids</taxon>
        <taxon>fabids</taxon>
        <taxon>Fabales</taxon>
        <taxon>Fabaceae</taxon>
        <taxon>Papilionoideae</taxon>
        <taxon>50 kb inversion clade</taxon>
        <taxon>NPAAA clade</taxon>
        <taxon>indigoferoid/millettioid clade</taxon>
        <taxon>Phaseoleae</taxon>
        <taxon>Glycine</taxon>
        <taxon>Glycine subgen. Soja</taxon>
    </lineage>
</organism>
<gene>
    <name evidence="4" type="primary">DGAT2D</name>
    <name evidence="6" type="ordered locus">Glyma01g156000</name>
</gene>
<feature type="chain" id="PRO_0000438911" description="Diacylglycerol O-acyltransferase 2D">
    <location>
        <begin position="1"/>
        <end position="329"/>
    </location>
</feature>
<feature type="transmembrane region" description="Helical" evidence="2">
    <location>
        <begin position="37"/>
        <end position="57"/>
    </location>
</feature>
<feature type="transmembrane region" description="Helical" evidence="2">
    <location>
        <begin position="58"/>
        <end position="78"/>
    </location>
</feature>
<comment type="function">
    <text evidence="3">Involved in triacylglycerol (TAG) synthesis. Catalyzes the acylation of the sn-3 hydroxy group of sn-1,2-diacylglycerol using acyl-CoA. Can use oleoyl-CoA and linoleoyl-CoA as substrates. May play a role in TAG biosynthesis in different tissues in responses to environmental and hormonal cues.</text>
</comment>
<comment type="catalytic activity">
    <reaction evidence="3">
        <text>an acyl-CoA + a 1,2-diacyl-sn-glycerol = a triacyl-sn-glycerol + CoA</text>
        <dbReference type="Rhea" id="RHEA:10868"/>
        <dbReference type="ChEBI" id="CHEBI:17815"/>
        <dbReference type="ChEBI" id="CHEBI:57287"/>
        <dbReference type="ChEBI" id="CHEBI:58342"/>
        <dbReference type="ChEBI" id="CHEBI:64615"/>
        <dbReference type="EC" id="2.3.1.20"/>
    </reaction>
</comment>
<comment type="subcellular location">
    <subcellularLocation>
        <location evidence="3">Endoplasmic reticulum membrane</location>
        <topology evidence="2">Multi-pass membrane protein</topology>
    </subcellularLocation>
    <subcellularLocation>
        <location evidence="1">Lipid droplet</location>
    </subcellularLocation>
</comment>
<comment type="tissue specificity">
    <text evidence="3">Highly expressed in flowers and seeds. Expressed at low levels in roots, stems, leaves and pods.</text>
</comment>
<comment type="induction">
    <text evidence="3">Induced by heat shock, cold stress, insect biting and abscisic acid (ABA). Down-regulated by treatment with jasmonate.</text>
</comment>
<comment type="similarity">
    <text evidence="5">Belongs to the diacylglycerol acyltransferase family.</text>
</comment>
<evidence type="ECO:0000250" key="1">
    <source>
        <dbReference type="UniProtKB" id="Q9ASU1"/>
    </source>
</evidence>
<evidence type="ECO:0000255" key="2"/>
<evidence type="ECO:0000269" key="3">
    <source>
    </source>
</evidence>
<evidence type="ECO:0000303" key="4">
    <source>
    </source>
</evidence>
<evidence type="ECO:0000305" key="5"/>
<evidence type="ECO:0000312" key="6">
    <source>
        <dbReference type="EMBL" id="KRH76487.1"/>
    </source>
</evidence>
<name>DAT2D_SOYBN</name>
<keyword id="KW-0012">Acyltransferase</keyword>
<keyword id="KW-0256">Endoplasmic reticulum</keyword>
<keyword id="KW-0319">Glycerol metabolism</keyword>
<keyword id="KW-0444">Lipid biosynthesis</keyword>
<keyword id="KW-0551">Lipid droplet</keyword>
<keyword id="KW-0443">Lipid metabolism</keyword>
<keyword id="KW-0472">Membrane</keyword>
<keyword id="KW-1185">Reference proteome</keyword>
<keyword id="KW-0808">Transferase</keyword>
<keyword id="KW-0812">Transmembrane</keyword>
<keyword id="KW-1133">Transmembrane helix</keyword>
<reference key="1">
    <citation type="journal article" date="2010" name="Nature">
        <title>Genome sequence of the palaeopolyploid soybean.</title>
        <authorList>
            <person name="Schmutz J."/>
            <person name="Cannon S.B."/>
            <person name="Schlueter J."/>
            <person name="Ma J."/>
            <person name="Mitros T."/>
            <person name="Nelson W."/>
            <person name="Hyten D.L."/>
            <person name="Song Q."/>
            <person name="Thelen J.J."/>
            <person name="Cheng J."/>
            <person name="Xu D."/>
            <person name="Hellsten U."/>
            <person name="May G.D."/>
            <person name="Yu Y."/>
            <person name="Sakurai T."/>
            <person name="Umezawa T."/>
            <person name="Bhattacharyya M.K."/>
            <person name="Sandhu D."/>
            <person name="Valliyodan B."/>
            <person name="Lindquist E."/>
            <person name="Peto M."/>
            <person name="Grant D."/>
            <person name="Shu S."/>
            <person name="Goodstein D."/>
            <person name="Barry K."/>
            <person name="Futrell-Griggs M."/>
            <person name="Abernathy B."/>
            <person name="Du J."/>
            <person name="Tian Z."/>
            <person name="Zhu L."/>
            <person name="Gill N."/>
            <person name="Joshi T."/>
            <person name="Libault M."/>
            <person name="Sethuraman A."/>
            <person name="Zhang X.-C."/>
            <person name="Shinozaki K."/>
            <person name="Nguyen H.T."/>
            <person name="Wing R.A."/>
            <person name="Cregan P."/>
            <person name="Specht J."/>
            <person name="Grimwood J."/>
            <person name="Rokhsar D."/>
            <person name="Stacey G."/>
            <person name="Shoemaker R.C."/>
            <person name="Jackson S.A."/>
        </authorList>
    </citation>
    <scope>NUCLEOTIDE SEQUENCE [LARGE SCALE GENOMIC DNA]</scope>
    <source>
        <strain>cv. Williams 82</strain>
    </source>
</reference>
<reference key="2">
    <citation type="journal article" date="2016" name="Sci. Rep.">
        <title>Two types of soybean diacylglycerol acyltransferases are differentially involved in triacylglycerol biosynthesis and response to environmental stresses and hormones.</title>
        <authorList>
            <person name="Chen B."/>
            <person name="Wang J."/>
            <person name="Zhang G."/>
            <person name="Liu J."/>
            <person name="Manan S."/>
            <person name="Hu H."/>
            <person name="Zhao J."/>
        </authorList>
    </citation>
    <scope>NUCLEOTIDE SEQUENCE [MRNA]</scope>
    <scope>FUNCTION</scope>
    <scope>CATALYTIC ACTIVITY</scope>
    <scope>SUBCELLULAR LOCATION</scope>
    <scope>TISSUE SPECIFICITY</scope>
    <scope>INDUCTION</scope>
    <source>
        <strain>cv. Williams 82</strain>
    </source>
</reference>